<evidence type="ECO:0000250" key="1">
    <source>
        <dbReference type="UniProtKB" id="Q0CCY0"/>
    </source>
</evidence>
<evidence type="ECO:0000255" key="2">
    <source>
        <dbReference type="PROSITE-ProRule" id="PRU00684"/>
    </source>
</evidence>
<evidence type="ECO:0000255" key="3">
    <source>
        <dbReference type="PROSITE-ProRule" id="PRU00685"/>
    </source>
</evidence>
<evidence type="ECO:0000269" key="4">
    <source>
    </source>
</evidence>
<evidence type="ECO:0000269" key="5">
    <source>
    </source>
</evidence>
<evidence type="ECO:0000269" key="6">
    <source>
    </source>
</evidence>
<evidence type="ECO:0000303" key="7">
    <source>
    </source>
</evidence>
<evidence type="ECO:0000303" key="8">
    <source>
    </source>
</evidence>
<evidence type="ECO:0000305" key="9"/>
<evidence type="ECO:0000305" key="10">
    <source>
    </source>
</evidence>
<evidence type="ECO:0000305" key="11">
    <source>
    </source>
</evidence>
<evidence type="ECO:0000305" key="12">
    <source>
    </source>
</evidence>
<protein>
    <recommendedName>
        <fullName evidence="7">Glutathione S-transferase-like protein tpcF</fullName>
        <ecNumber evidence="11">2.5.1.-</ecNumber>
    </recommendedName>
    <alternativeName>
        <fullName evidence="7">Trypacidin synthesis protein E</fullName>
    </alternativeName>
</protein>
<accession>Q4WQZ2</accession>
<comment type="function">
    <text evidence="1 4 5 6">Glutathione S-transferase-like protein; part of the gene cluster that mediates the biosynthesis of trypacidin, a mycotoxin with antiprotozoal activity and that plays a role in the infection process (PubMed:26242966, PubMed:26278536). The pathway begins with the synthesis of atrochrysone thioester by the polyketide synthase (PKS) tpcC (PubMed:26242966). The atrochrysone carboxyl ACP thioesterase tpcB then breaks the thioester bond and releases the atrochrysone carboxylic acid from tpcC (PubMed:26242966). The decarboxylase tpcK converts atrochrysone carboxylic acid to atrochrysone which is further reduced into emodin anthrone (PubMed:26242966). The next step is performed by the emodin anthrone oxygenase tpcL that catalyzes the oxidation of emodinanthrone to emodin (PubMed:26242966). Emodin O-methyltransferase encoded by tpcA catalyzes methylation of the 8-hydroxy group of emodin to form questin (PubMed:26242966). Ring cleavage of questin by questin oxidase tpcI leads to desmethylsulochrin via several intermediates including questin epoxide (By similarity). Another methylation step catalyzed by tpcM leads to the formation of sulochrin which is further converted to monomethylsulfochrin by tpcH. Finally, the tpcJ catalyzes the conversion of monomethylsulfochrin to trypacidin (PubMed:26242966). Trypacidin is toxic for human pulmonary and bronchial epithelial cells by initiating the intracellular formation of nitric oxide (NO) and hydrogen peroxide (H(2)O(2)), thus triggering host necrotic cell death (PubMed:22319557). The trypacidin pathway is also able to produce endocrocin via a distinct route from the endocrocin Enc pathway (PubMed:26242966).</text>
</comment>
<comment type="pathway">
    <text evidence="12">Secondary metabolite biosynthesis.</text>
</comment>
<comment type="tissue specificity">
    <text evidence="10">Specifically expressed in conidia (PubMed:22319557).</text>
</comment>
<comment type="similarity">
    <text evidence="9">Belongs to the GST superfamily.</text>
</comment>
<sequence>MPDIQPITVYGKGGPNPPRVAIILAELDLPHKVIEVPLSKVKEPDYVAINPNGRIPAIYDPNTDLTLWESGAIVEYLVSHYDPDHRISFPAGSNLAALATQWLFFQASGQGPYYGQASWFKKFHHEKVPSAIERYVKEINRVTGVLEGHLSRQKVAADGDGPWLVGGKCSFADLAWIPWQVIVTAIIQPEDGYTVEDYPHVKNWLDRMMARPGVQKGMADIFPST</sequence>
<dbReference type="EC" id="2.5.1.-" evidence="11"/>
<dbReference type="EMBL" id="AAHF01000005">
    <property type="protein sequence ID" value="EAL89342.1"/>
    <property type="molecule type" value="Genomic_DNA"/>
</dbReference>
<dbReference type="RefSeq" id="XP_751380.1">
    <property type="nucleotide sequence ID" value="XM_746287.1"/>
</dbReference>
<dbReference type="SMR" id="Q4WQZ2"/>
<dbReference type="FunCoup" id="Q4WQZ2">
    <property type="interactions" value="691"/>
</dbReference>
<dbReference type="STRING" id="330879.Q4WQZ2"/>
<dbReference type="EnsemblFungi" id="EAL89342">
    <property type="protein sequence ID" value="EAL89342"/>
    <property type="gene ID" value="AFUA_4G14530"/>
</dbReference>
<dbReference type="GeneID" id="3509604"/>
<dbReference type="KEGG" id="afm:AFUA_4G14530"/>
<dbReference type="VEuPathDB" id="FungiDB:Afu4g14530"/>
<dbReference type="HOGENOM" id="CLU_011226_14_2_1"/>
<dbReference type="InParanoid" id="Q4WQZ2"/>
<dbReference type="OMA" id="IATFGWT"/>
<dbReference type="OrthoDB" id="422574at2759"/>
<dbReference type="Proteomes" id="UP000002530">
    <property type="component" value="Chromosome 4"/>
</dbReference>
<dbReference type="GO" id="GO:0005737">
    <property type="term" value="C:cytoplasm"/>
    <property type="evidence" value="ECO:0000318"/>
    <property type="project" value="GO_Central"/>
</dbReference>
<dbReference type="GO" id="GO:0004602">
    <property type="term" value="F:glutathione peroxidase activity"/>
    <property type="evidence" value="ECO:0000314"/>
    <property type="project" value="AspGD"/>
</dbReference>
<dbReference type="GO" id="GO:0004364">
    <property type="term" value="F:glutathione transferase activity"/>
    <property type="evidence" value="ECO:0000314"/>
    <property type="project" value="AspGD"/>
</dbReference>
<dbReference type="CDD" id="cd10293">
    <property type="entry name" value="GST_C_Ure2p"/>
    <property type="match status" value="1"/>
</dbReference>
<dbReference type="CDD" id="cd03048">
    <property type="entry name" value="GST_N_Ure2p_like"/>
    <property type="match status" value="1"/>
</dbReference>
<dbReference type="FunFam" id="3.40.30.10:FF:000471">
    <property type="entry name" value="Glutathione S-transferase 1"/>
    <property type="match status" value="1"/>
</dbReference>
<dbReference type="Gene3D" id="1.20.1050.10">
    <property type="match status" value="1"/>
</dbReference>
<dbReference type="Gene3D" id="3.40.30.10">
    <property type="entry name" value="Glutaredoxin"/>
    <property type="match status" value="1"/>
</dbReference>
<dbReference type="InterPro" id="IPR010987">
    <property type="entry name" value="Glutathione-S-Trfase_C-like"/>
</dbReference>
<dbReference type="InterPro" id="IPR036282">
    <property type="entry name" value="Glutathione-S-Trfase_C_sf"/>
</dbReference>
<dbReference type="InterPro" id="IPR040079">
    <property type="entry name" value="Glutathione_S-Trfase"/>
</dbReference>
<dbReference type="InterPro" id="IPR004045">
    <property type="entry name" value="Glutathione_S-Trfase_N"/>
</dbReference>
<dbReference type="InterPro" id="IPR004046">
    <property type="entry name" value="GST_C"/>
</dbReference>
<dbReference type="InterPro" id="IPR036249">
    <property type="entry name" value="Thioredoxin-like_sf"/>
</dbReference>
<dbReference type="PANTHER" id="PTHR44051:SF23">
    <property type="entry name" value="GLUTATHIONE S-TRANSFERASE-LIKE PROTEIN TPCF"/>
    <property type="match status" value="1"/>
</dbReference>
<dbReference type="PANTHER" id="PTHR44051">
    <property type="entry name" value="GLUTATHIONE S-TRANSFERASE-RELATED"/>
    <property type="match status" value="1"/>
</dbReference>
<dbReference type="Pfam" id="PF00043">
    <property type="entry name" value="GST_C"/>
    <property type="match status" value="1"/>
</dbReference>
<dbReference type="Pfam" id="PF13409">
    <property type="entry name" value="GST_N_2"/>
    <property type="match status" value="1"/>
</dbReference>
<dbReference type="SFLD" id="SFLDS00019">
    <property type="entry name" value="Glutathione_Transferase_(cytos"/>
    <property type="match status" value="1"/>
</dbReference>
<dbReference type="SFLD" id="SFLDG01151">
    <property type="entry name" value="Main.2:_Nu-like"/>
    <property type="match status" value="1"/>
</dbReference>
<dbReference type="SUPFAM" id="SSF47616">
    <property type="entry name" value="GST C-terminal domain-like"/>
    <property type="match status" value="1"/>
</dbReference>
<dbReference type="SUPFAM" id="SSF52833">
    <property type="entry name" value="Thioredoxin-like"/>
    <property type="match status" value="1"/>
</dbReference>
<dbReference type="PROSITE" id="PS50405">
    <property type="entry name" value="GST_CTER"/>
    <property type="match status" value="1"/>
</dbReference>
<dbReference type="PROSITE" id="PS50404">
    <property type="entry name" value="GST_NTER"/>
    <property type="match status" value="1"/>
</dbReference>
<proteinExistence type="evidence at transcript level"/>
<reference key="1">
    <citation type="journal article" date="2005" name="Nature">
        <title>Genomic sequence of the pathogenic and allergenic filamentous fungus Aspergillus fumigatus.</title>
        <authorList>
            <person name="Nierman W.C."/>
            <person name="Pain A."/>
            <person name="Anderson M.J."/>
            <person name="Wortman J.R."/>
            <person name="Kim H.S."/>
            <person name="Arroyo J."/>
            <person name="Berriman M."/>
            <person name="Abe K."/>
            <person name="Archer D.B."/>
            <person name="Bermejo C."/>
            <person name="Bennett J.W."/>
            <person name="Bowyer P."/>
            <person name="Chen D."/>
            <person name="Collins M."/>
            <person name="Coulsen R."/>
            <person name="Davies R."/>
            <person name="Dyer P.S."/>
            <person name="Farman M.L."/>
            <person name="Fedorova N."/>
            <person name="Fedorova N.D."/>
            <person name="Feldblyum T.V."/>
            <person name="Fischer R."/>
            <person name="Fosker N."/>
            <person name="Fraser A."/>
            <person name="Garcia J.L."/>
            <person name="Garcia M.J."/>
            <person name="Goble A."/>
            <person name="Goldman G.H."/>
            <person name="Gomi K."/>
            <person name="Griffith-Jones S."/>
            <person name="Gwilliam R."/>
            <person name="Haas B.J."/>
            <person name="Haas H."/>
            <person name="Harris D.E."/>
            <person name="Horiuchi H."/>
            <person name="Huang J."/>
            <person name="Humphray S."/>
            <person name="Jimenez J."/>
            <person name="Keller N."/>
            <person name="Khouri H."/>
            <person name="Kitamoto K."/>
            <person name="Kobayashi T."/>
            <person name="Konzack S."/>
            <person name="Kulkarni R."/>
            <person name="Kumagai T."/>
            <person name="Lafton A."/>
            <person name="Latge J.-P."/>
            <person name="Li W."/>
            <person name="Lord A."/>
            <person name="Lu C."/>
            <person name="Majoros W.H."/>
            <person name="May G.S."/>
            <person name="Miller B.L."/>
            <person name="Mohamoud Y."/>
            <person name="Molina M."/>
            <person name="Monod M."/>
            <person name="Mouyna I."/>
            <person name="Mulligan S."/>
            <person name="Murphy L.D."/>
            <person name="O'Neil S."/>
            <person name="Paulsen I."/>
            <person name="Penalva M.A."/>
            <person name="Pertea M."/>
            <person name="Price C."/>
            <person name="Pritchard B.L."/>
            <person name="Quail M.A."/>
            <person name="Rabbinowitsch E."/>
            <person name="Rawlins N."/>
            <person name="Rajandream M.A."/>
            <person name="Reichard U."/>
            <person name="Renauld H."/>
            <person name="Robson G.D."/>
            <person name="Rodriguez de Cordoba S."/>
            <person name="Rodriguez-Pena J.M."/>
            <person name="Ronning C.M."/>
            <person name="Rutter S."/>
            <person name="Salzberg S.L."/>
            <person name="Sanchez M."/>
            <person name="Sanchez-Ferrero J.C."/>
            <person name="Saunders D."/>
            <person name="Seeger K."/>
            <person name="Squares R."/>
            <person name="Squares S."/>
            <person name="Takeuchi M."/>
            <person name="Tekaia F."/>
            <person name="Turner G."/>
            <person name="Vazquez de Aldana C.R."/>
            <person name="Weidman J."/>
            <person name="White O."/>
            <person name="Woodward J.R."/>
            <person name="Yu J.-H."/>
            <person name="Fraser C.M."/>
            <person name="Galagan J.E."/>
            <person name="Asai K."/>
            <person name="Machida M."/>
            <person name="Hall N."/>
            <person name="Barrell B.G."/>
            <person name="Denning D.W."/>
        </authorList>
    </citation>
    <scope>NUCLEOTIDE SEQUENCE [LARGE SCALE GENOMIC DNA]</scope>
    <source>
        <strain>ATCC MYA-4609 / CBS 101355 / FGSC A1100 / Af293</strain>
    </source>
</reference>
<reference key="2">
    <citation type="journal article" date="2012" name="PLoS ONE">
        <title>Trypacidin, a spore-borne toxin from Aspergillus fumigatus, is cytotoxic to lung cells.</title>
        <authorList>
            <person name="Gauthier T."/>
            <person name="Wang X."/>
            <person name="Sifuentes Dos Santos J."/>
            <person name="Fysikopoulos A."/>
            <person name="Tadrist S."/>
            <person name="Canlet C."/>
            <person name="Artigot M.P."/>
            <person name="Loiseau N."/>
            <person name="Oswald I.P."/>
            <person name="Puel O."/>
        </authorList>
    </citation>
    <scope>FUNCTION</scope>
    <scope>TISSUE SPECIFICITY</scope>
</reference>
<reference key="3">
    <citation type="journal article" date="2015" name="Appl. Microbiol. Biotechnol.">
        <title>Identification of the antiphagocytic trypacidin gene cluster in the human-pathogenic fungus Aspergillus fumigatus.</title>
        <authorList>
            <person name="Mattern D.J."/>
            <person name="Schoeler H."/>
            <person name="Weber J."/>
            <person name="Novohradska S."/>
            <person name="Kraibooj K."/>
            <person name="Dahse H.M."/>
            <person name="Hillmann F."/>
            <person name="Valiante V."/>
            <person name="Figge M.T."/>
            <person name="Brakhage A.A."/>
        </authorList>
    </citation>
    <scope>FUNCTION</scope>
</reference>
<reference key="4">
    <citation type="journal article" date="2016" name="Environ. Microbiol.">
        <title>Redundant synthesis of a conidial polyketide by two distinct secondary metabolite clusters in Aspergillus fumigatus.</title>
        <authorList>
            <person name="Throckmorton K."/>
            <person name="Lim F.Y."/>
            <person name="Kontoyiannis D.P."/>
            <person name="Zheng W."/>
            <person name="Keller N.P."/>
        </authorList>
    </citation>
    <scope>FUNCTION</scope>
</reference>
<name>TPCF_ASPFU</name>
<feature type="chain" id="PRO_0000437069" description="Glutathione S-transferase-like protein tpcF">
    <location>
        <begin position="1"/>
        <end position="225"/>
    </location>
</feature>
<feature type="domain" description="GST N-terminal" evidence="2">
    <location>
        <begin position="4"/>
        <end position="85"/>
    </location>
</feature>
<feature type="domain" description="GST C-terminal" evidence="3">
    <location>
        <begin position="92"/>
        <end position="225"/>
    </location>
</feature>
<gene>
    <name evidence="7" type="primary">tpcF</name>
    <name evidence="8" type="synonym">tynF</name>
    <name type="ORF">AFUA_4G14530</name>
</gene>
<organism>
    <name type="scientific">Aspergillus fumigatus (strain ATCC MYA-4609 / CBS 101355 / FGSC A1100 / Af293)</name>
    <name type="common">Neosartorya fumigata</name>
    <dbReference type="NCBI Taxonomy" id="330879"/>
    <lineage>
        <taxon>Eukaryota</taxon>
        <taxon>Fungi</taxon>
        <taxon>Dikarya</taxon>
        <taxon>Ascomycota</taxon>
        <taxon>Pezizomycotina</taxon>
        <taxon>Eurotiomycetes</taxon>
        <taxon>Eurotiomycetidae</taxon>
        <taxon>Eurotiales</taxon>
        <taxon>Aspergillaceae</taxon>
        <taxon>Aspergillus</taxon>
        <taxon>Aspergillus subgen. Fumigati</taxon>
    </lineage>
</organism>
<keyword id="KW-1185">Reference proteome</keyword>
<keyword id="KW-0808">Transferase</keyword>